<organism>
    <name type="scientific">Photobacterium profundum (strain SS9)</name>
    <dbReference type="NCBI Taxonomy" id="298386"/>
    <lineage>
        <taxon>Bacteria</taxon>
        <taxon>Pseudomonadati</taxon>
        <taxon>Pseudomonadota</taxon>
        <taxon>Gammaproteobacteria</taxon>
        <taxon>Vibrionales</taxon>
        <taxon>Vibrionaceae</taxon>
        <taxon>Photobacterium</taxon>
    </lineage>
</organism>
<name>PFKA_PHOPR</name>
<accession>Q6LVK2</accession>
<evidence type="ECO:0000255" key="1">
    <source>
        <dbReference type="HAMAP-Rule" id="MF_00339"/>
    </source>
</evidence>
<gene>
    <name evidence="1" type="primary">pfkA</name>
    <name type="ordered locus">PBPRA0234</name>
</gene>
<reference key="1">
    <citation type="journal article" date="2005" name="Science">
        <title>Life at depth: Photobacterium profundum genome sequence and expression analysis.</title>
        <authorList>
            <person name="Vezzi A."/>
            <person name="Campanaro S."/>
            <person name="D'Angelo M."/>
            <person name="Simonato F."/>
            <person name="Vitulo N."/>
            <person name="Lauro F.M."/>
            <person name="Cestaro A."/>
            <person name="Malacrida G."/>
            <person name="Simionati B."/>
            <person name="Cannata N."/>
            <person name="Romualdi C."/>
            <person name="Bartlett D.H."/>
            <person name="Valle G."/>
        </authorList>
    </citation>
    <scope>NUCLEOTIDE SEQUENCE [LARGE SCALE GENOMIC DNA]</scope>
    <source>
        <strain>ATCC BAA-1253 / SS9</strain>
    </source>
</reference>
<comment type="function">
    <text evidence="1">Catalyzes the phosphorylation of D-fructose 6-phosphate to fructose 1,6-bisphosphate by ATP, the first committing step of glycolysis.</text>
</comment>
<comment type="catalytic activity">
    <reaction evidence="1">
        <text>beta-D-fructose 6-phosphate + ATP = beta-D-fructose 1,6-bisphosphate + ADP + H(+)</text>
        <dbReference type="Rhea" id="RHEA:16109"/>
        <dbReference type="ChEBI" id="CHEBI:15378"/>
        <dbReference type="ChEBI" id="CHEBI:30616"/>
        <dbReference type="ChEBI" id="CHEBI:32966"/>
        <dbReference type="ChEBI" id="CHEBI:57634"/>
        <dbReference type="ChEBI" id="CHEBI:456216"/>
        <dbReference type="EC" id="2.7.1.11"/>
    </reaction>
</comment>
<comment type="cofactor">
    <cofactor evidence="1">
        <name>Mg(2+)</name>
        <dbReference type="ChEBI" id="CHEBI:18420"/>
    </cofactor>
</comment>
<comment type="activity regulation">
    <text evidence="1">Allosterically activated by ADP and other diphosphonucleosides, and allosterically inhibited by phosphoenolpyruvate.</text>
</comment>
<comment type="pathway">
    <text evidence="1">Carbohydrate degradation; glycolysis; D-glyceraldehyde 3-phosphate and glycerone phosphate from D-glucose: step 3/4.</text>
</comment>
<comment type="subunit">
    <text evidence="1">Homotetramer.</text>
</comment>
<comment type="subcellular location">
    <subcellularLocation>
        <location evidence="1">Cytoplasm</location>
    </subcellularLocation>
</comment>
<comment type="similarity">
    <text evidence="1">Belongs to the phosphofructokinase type A (PFKA) family. ATP-dependent PFK group I subfamily. Prokaryotic clade 'B1' sub-subfamily.</text>
</comment>
<dbReference type="EC" id="2.7.1.11" evidence="1"/>
<dbReference type="EMBL" id="CR378663">
    <property type="protein sequence ID" value="CAG18673.1"/>
    <property type="molecule type" value="Genomic_DNA"/>
</dbReference>
<dbReference type="RefSeq" id="WP_011217049.1">
    <property type="nucleotide sequence ID" value="NC_006370.1"/>
</dbReference>
<dbReference type="SMR" id="Q6LVK2"/>
<dbReference type="STRING" id="298386.PBPRA0234"/>
<dbReference type="KEGG" id="ppr:PBPRA0234"/>
<dbReference type="eggNOG" id="COG0205">
    <property type="taxonomic scope" value="Bacteria"/>
</dbReference>
<dbReference type="HOGENOM" id="CLU_020655_0_1_6"/>
<dbReference type="UniPathway" id="UPA00109">
    <property type="reaction ID" value="UER00182"/>
</dbReference>
<dbReference type="Proteomes" id="UP000000593">
    <property type="component" value="Chromosome 1"/>
</dbReference>
<dbReference type="GO" id="GO:0005945">
    <property type="term" value="C:6-phosphofructokinase complex"/>
    <property type="evidence" value="ECO:0007669"/>
    <property type="project" value="TreeGrafter"/>
</dbReference>
<dbReference type="GO" id="GO:0003872">
    <property type="term" value="F:6-phosphofructokinase activity"/>
    <property type="evidence" value="ECO:0007669"/>
    <property type="project" value="UniProtKB-UniRule"/>
</dbReference>
<dbReference type="GO" id="GO:0016208">
    <property type="term" value="F:AMP binding"/>
    <property type="evidence" value="ECO:0007669"/>
    <property type="project" value="TreeGrafter"/>
</dbReference>
<dbReference type="GO" id="GO:0005524">
    <property type="term" value="F:ATP binding"/>
    <property type="evidence" value="ECO:0007669"/>
    <property type="project" value="UniProtKB-KW"/>
</dbReference>
<dbReference type="GO" id="GO:0070095">
    <property type="term" value="F:fructose-6-phosphate binding"/>
    <property type="evidence" value="ECO:0007669"/>
    <property type="project" value="TreeGrafter"/>
</dbReference>
<dbReference type="GO" id="GO:0042802">
    <property type="term" value="F:identical protein binding"/>
    <property type="evidence" value="ECO:0007669"/>
    <property type="project" value="TreeGrafter"/>
</dbReference>
<dbReference type="GO" id="GO:0046872">
    <property type="term" value="F:metal ion binding"/>
    <property type="evidence" value="ECO:0007669"/>
    <property type="project" value="UniProtKB-KW"/>
</dbReference>
<dbReference type="GO" id="GO:0048029">
    <property type="term" value="F:monosaccharide binding"/>
    <property type="evidence" value="ECO:0007669"/>
    <property type="project" value="TreeGrafter"/>
</dbReference>
<dbReference type="GO" id="GO:0061621">
    <property type="term" value="P:canonical glycolysis"/>
    <property type="evidence" value="ECO:0007669"/>
    <property type="project" value="TreeGrafter"/>
</dbReference>
<dbReference type="GO" id="GO:0030388">
    <property type="term" value="P:fructose 1,6-bisphosphate metabolic process"/>
    <property type="evidence" value="ECO:0007669"/>
    <property type="project" value="TreeGrafter"/>
</dbReference>
<dbReference type="GO" id="GO:0006002">
    <property type="term" value="P:fructose 6-phosphate metabolic process"/>
    <property type="evidence" value="ECO:0007669"/>
    <property type="project" value="InterPro"/>
</dbReference>
<dbReference type="CDD" id="cd00763">
    <property type="entry name" value="Bacterial_PFK"/>
    <property type="match status" value="1"/>
</dbReference>
<dbReference type="FunFam" id="3.40.50.450:FF:000001">
    <property type="entry name" value="ATP-dependent 6-phosphofructokinase"/>
    <property type="match status" value="1"/>
</dbReference>
<dbReference type="FunFam" id="3.40.50.460:FF:000002">
    <property type="entry name" value="ATP-dependent 6-phosphofructokinase"/>
    <property type="match status" value="1"/>
</dbReference>
<dbReference type="Gene3D" id="3.40.50.450">
    <property type="match status" value="1"/>
</dbReference>
<dbReference type="Gene3D" id="3.40.50.460">
    <property type="entry name" value="Phosphofructokinase domain"/>
    <property type="match status" value="1"/>
</dbReference>
<dbReference type="HAMAP" id="MF_00339">
    <property type="entry name" value="Phosphofructokinase_I_B1"/>
    <property type="match status" value="1"/>
</dbReference>
<dbReference type="InterPro" id="IPR022953">
    <property type="entry name" value="ATP_PFK"/>
</dbReference>
<dbReference type="InterPro" id="IPR012003">
    <property type="entry name" value="ATP_PFK_prok-type"/>
</dbReference>
<dbReference type="InterPro" id="IPR012828">
    <property type="entry name" value="PFKA_ATP_prok"/>
</dbReference>
<dbReference type="InterPro" id="IPR015912">
    <property type="entry name" value="Phosphofructokinase_CS"/>
</dbReference>
<dbReference type="InterPro" id="IPR000023">
    <property type="entry name" value="Phosphofructokinase_dom"/>
</dbReference>
<dbReference type="InterPro" id="IPR035966">
    <property type="entry name" value="PKF_sf"/>
</dbReference>
<dbReference type="NCBIfam" id="TIGR02482">
    <property type="entry name" value="PFKA_ATP"/>
    <property type="match status" value="1"/>
</dbReference>
<dbReference type="NCBIfam" id="NF002872">
    <property type="entry name" value="PRK03202.1"/>
    <property type="match status" value="1"/>
</dbReference>
<dbReference type="PANTHER" id="PTHR13697:SF4">
    <property type="entry name" value="ATP-DEPENDENT 6-PHOSPHOFRUCTOKINASE"/>
    <property type="match status" value="1"/>
</dbReference>
<dbReference type="PANTHER" id="PTHR13697">
    <property type="entry name" value="PHOSPHOFRUCTOKINASE"/>
    <property type="match status" value="1"/>
</dbReference>
<dbReference type="Pfam" id="PF00365">
    <property type="entry name" value="PFK"/>
    <property type="match status" value="1"/>
</dbReference>
<dbReference type="PIRSF" id="PIRSF000532">
    <property type="entry name" value="ATP_PFK_prok"/>
    <property type="match status" value="1"/>
</dbReference>
<dbReference type="PRINTS" id="PR00476">
    <property type="entry name" value="PHFRCTKINASE"/>
</dbReference>
<dbReference type="SUPFAM" id="SSF53784">
    <property type="entry name" value="Phosphofructokinase"/>
    <property type="match status" value="1"/>
</dbReference>
<dbReference type="PROSITE" id="PS00433">
    <property type="entry name" value="PHOSPHOFRUCTOKINASE"/>
    <property type="match status" value="1"/>
</dbReference>
<keyword id="KW-0021">Allosteric enzyme</keyword>
<keyword id="KW-0067">ATP-binding</keyword>
<keyword id="KW-0963">Cytoplasm</keyword>
<keyword id="KW-0324">Glycolysis</keyword>
<keyword id="KW-0418">Kinase</keyword>
<keyword id="KW-0460">Magnesium</keyword>
<keyword id="KW-0479">Metal-binding</keyword>
<keyword id="KW-0547">Nucleotide-binding</keyword>
<keyword id="KW-1185">Reference proteome</keyword>
<keyword id="KW-0808">Transferase</keyword>
<proteinExistence type="inferred from homology"/>
<feature type="chain" id="PRO_1000059784" description="ATP-dependent 6-phosphofructokinase">
    <location>
        <begin position="1"/>
        <end position="320"/>
    </location>
</feature>
<feature type="active site" description="Proton acceptor" evidence="1">
    <location>
        <position position="128"/>
    </location>
</feature>
<feature type="binding site" evidence="1">
    <location>
        <position position="12"/>
    </location>
    <ligand>
        <name>ATP</name>
        <dbReference type="ChEBI" id="CHEBI:30616"/>
    </ligand>
</feature>
<feature type="binding site" evidence="1">
    <location>
        <begin position="22"/>
        <end position="26"/>
    </location>
    <ligand>
        <name>ADP</name>
        <dbReference type="ChEBI" id="CHEBI:456216"/>
        <note>allosteric activator; ligand shared between dimeric partners</note>
    </ligand>
</feature>
<feature type="binding site" evidence="1">
    <location>
        <begin position="73"/>
        <end position="74"/>
    </location>
    <ligand>
        <name>ATP</name>
        <dbReference type="ChEBI" id="CHEBI:30616"/>
    </ligand>
</feature>
<feature type="binding site" evidence="1">
    <location>
        <begin position="103"/>
        <end position="106"/>
    </location>
    <ligand>
        <name>ATP</name>
        <dbReference type="ChEBI" id="CHEBI:30616"/>
    </ligand>
</feature>
<feature type="binding site" evidence="1">
    <location>
        <position position="104"/>
    </location>
    <ligand>
        <name>Mg(2+)</name>
        <dbReference type="ChEBI" id="CHEBI:18420"/>
        <note>catalytic</note>
    </ligand>
</feature>
<feature type="binding site" description="in other chain" evidence="1">
    <location>
        <begin position="126"/>
        <end position="128"/>
    </location>
    <ligand>
        <name>substrate</name>
        <note>ligand shared between dimeric partners</note>
    </ligand>
</feature>
<feature type="binding site" description="in other chain" evidence="1">
    <location>
        <position position="155"/>
    </location>
    <ligand>
        <name>ADP</name>
        <dbReference type="ChEBI" id="CHEBI:456216"/>
        <note>allosteric activator; ligand shared between dimeric partners</note>
    </ligand>
</feature>
<feature type="binding site" evidence="1">
    <location>
        <position position="163"/>
    </location>
    <ligand>
        <name>substrate</name>
        <note>ligand shared between dimeric partners</note>
    </ligand>
</feature>
<feature type="binding site" description="in other chain" evidence="1">
    <location>
        <begin position="170"/>
        <end position="172"/>
    </location>
    <ligand>
        <name>substrate</name>
        <note>ligand shared between dimeric partners</note>
    </ligand>
</feature>
<feature type="binding site" description="in other chain" evidence="1">
    <location>
        <begin position="186"/>
        <end position="188"/>
    </location>
    <ligand>
        <name>ADP</name>
        <dbReference type="ChEBI" id="CHEBI:456216"/>
        <note>allosteric activator; ligand shared between dimeric partners</note>
    </ligand>
</feature>
<feature type="binding site" description="in other chain" evidence="1">
    <location>
        <position position="212"/>
    </location>
    <ligand>
        <name>ADP</name>
        <dbReference type="ChEBI" id="CHEBI:456216"/>
        <note>allosteric activator; ligand shared between dimeric partners</note>
    </ligand>
</feature>
<feature type="binding site" description="in other chain" evidence="1">
    <location>
        <begin position="214"/>
        <end position="216"/>
    </location>
    <ligand>
        <name>ADP</name>
        <dbReference type="ChEBI" id="CHEBI:456216"/>
        <note>allosteric activator; ligand shared between dimeric partners</note>
    </ligand>
</feature>
<feature type="binding site" description="in other chain" evidence="1">
    <location>
        <position position="223"/>
    </location>
    <ligand>
        <name>substrate</name>
        <note>ligand shared between dimeric partners</note>
    </ligand>
</feature>
<feature type="binding site" evidence="1">
    <location>
        <position position="244"/>
    </location>
    <ligand>
        <name>substrate</name>
        <note>ligand shared between dimeric partners</note>
    </ligand>
</feature>
<feature type="binding site" description="in other chain" evidence="1">
    <location>
        <begin position="250"/>
        <end position="253"/>
    </location>
    <ligand>
        <name>substrate</name>
        <note>ligand shared between dimeric partners</note>
    </ligand>
</feature>
<sequence length="320" mass="34784">MIKKIGVLTSGGDAPGMNAAVRGVVRAALSDGLEVYGIYDGYQGLHQNRIEKLSRTSVSDVINRGGTFLGSARFPEFKDEKVRAQAIQNLKMHGIEALVVIGGDGSYMGAKKLTEMGFPCIGIPGTIDNDVAGTDYTIGYFTALNTVIDAIDRLRDTSSSHQRISIVEVMGRHCGDLTLMSAIAGGCEYIITPETGLHKEELIAKIKEGIYKGKKHAIVALTELMTDANELAKYIEDETGRETRATVLGHIQRGGQPTAFDRILASRMGAYAVELLIQGEGGRCVGVQNEKMVHHDIIDAIENMKRPVRKDLYELADKLF</sequence>
<protein>
    <recommendedName>
        <fullName evidence="1">ATP-dependent 6-phosphofructokinase</fullName>
        <shortName evidence="1">ATP-PFK</shortName>
        <shortName evidence="1">Phosphofructokinase</shortName>
        <ecNumber evidence="1">2.7.1.11</ecNumber>
    </recommendedName>
    <alternativeName>
        <fullName evidence="1">Phosphohexokinase</fullName>
    </alternativeName>
</protein>